<comment type="function">
    <text evidence="1">Toxic component of a type II toxin-antitoxin (TA) system. An RNase. The cognate antitoxin is VapB16 (By similarity).</text>
</comment>
<comment type="cofactor">
    <cofactor evidence="1">
        <name>Mg(2+)</name>
        <dbReference type="ChEBI" id="CHEBI:18420"/>
    </cofactor>
</comment>
<comment type="similarity">
    <text evidence="1">Belongs to the PINc/VapC protein family.</text>
</comment>
<gene>
    <name evidence="1" type="primary">vapC16</name>
    <name type="ordered locus">Rv2231A</name>
</gene>
<proteinExistence type="inferred from homology"/>
<feature type="chain" id="PRO_0000407875" description="Ribonuclease VapC16">
    <location>
        <begin position="1"/>
        <end position="141"/>
    </location>
</feature>
<feature type="region of interest" description="Disordered" evidence="2">
    <location>
        <begin position="99"/>
        <end position="141"/>
    </location>
</feature>
<feature type="binding site" evidence="1">
    <location>
        <position position="99"/>
    </location>
    <ligand>
        <name>Mg(2+)</name>
        <dbReference type="ChEBI" id="CHEBI:18420"/>
    </ligand>
</feature>
<accession>P0CV93</accession>
<accession>L0T977</accession>
<organism>
    <name type="scientific">Mycobacterium tuberculosis (strain ATCC 25618 / H37Rv)</name>
    <dbReference type="NCBI Taxonomy" id="83332"/>
    <lineage>
        <taxon>Bacteria</taxon>
        <taxon>Bacillati</taxon>
        <taxon>Actinomycetota</taxon>
        <taxon>Actinomycetes</taxon>
        <taxon>Mycobacteriales</taxon>
        <taxon>Mycobacteriaceae</taxon>
        <taxon>Mycobacterium</taxon>
        <taxon>Mycobacterium tuberculosis complex</taxon>
    </lineage>
</organism>
<keyword id="KW-0378">Hydrolase</keyword>
<keyword id="KW-0460">Magnesium</keyword>
<keyword id="KW-0479">Metal-binding</keyword>
<keyword id="KW-0540">Nuclease</keyword>
<keyword id="KW-1185">Reference proteome</keyword>
<keyword id="KW-1277">Toxin-antitoxin system</keyword>
<evidence type="ECO:0000255" key="1">
    <source>
        <dbReference type="HAMAP-Rule" id="MF_00265"/>
    </source>
</evidence>
<evidence type="ECO:0000256" key="2">
    <source>
        <dbReference type="SAM" id="MobiDB-lite"/>
    </source>
</evidence>
<name>VPC16_MYCTU</name>
<reference key="1">
    <citation type="journal article" date="1998" name="Nature">
        <title>Deciphering the biology of Mycobacterium tuberculosis from the complete genome sequence.</title>
        <authorList>
            <person name="Cole S.T."/>
            <person name="Brosch R."/>
            <person name="Parkhill J."/>
            <person name="Garnier T."/>
            <person name="Churcher C.M."/>
            <person name="Harris D.E."/>
            <person name="Gordon S.V."/>
            <person name="Eiglmeier K."/>
            <person name="Gas S."/>
            <person name="Barry C.E. III"/>
            <person name="Tekaia F."/>
            <person name="Badcock K."/>
            <person name="Basham D."/>
            <person name="Brown D."/>
            <person name="Chillingworth T."/>
            <person name="Connor R."/>
            <person name="Davies R.M."/>
            <person name="Devlin K."/>
            <person name="Feltwell T."/>
            <person name="Gentles S."/>
            <person name="Hamlin N."/>
            <person name="Holroyd S."/>
            <person name="Hornsby T."/>
            <person name="Jagels K."/>
            <person name="Krogh A."/>
            <person name="McLean J."/>
            <person name="Moule S."/>
            <person name="Murphy L.D."/>
            <person name="Oliver S."/>
            <person name="Osborne J."/>
            <person name="Quail M.A."/>
            <person name="Rajandream M.A."/>
            <person name="Rogers J."/>
            <person name="Rutter S."/>
            <person name="Seeger K."/>
            <person name="Skelton S."/>
            <person name="Squares S."/>
            <person name="Squares R."/>
            <person name="Sulston J.E."/>
            <person name="Taylor K."/>
            <person name="Whitehead S."/>
            <person name="Barrell B.G."/>
        </authorList>
    </citation>
    <scope>NUCLEOTIDE SEQUENCE [LARGE SCALE GENOMIC DNA]</scope>
    <source>
        <strain>ATCC 25618 / H37Rv</strain>
    </source>
</reference>
<reference key="2">
    <citation type="journal article" date="2005" name="Nucleic Acids Res.">
        <title>Toxin-antitoxin loci are highly abundant in free-living but lost from host-associated prokaryotes.</title>
        <authorList>
            <person name="Pandey D.P."/>
            <person name="Gerdes K."/>
        </authorList>
    </citation>
    <scope>IDENTIFICATION</scope>
    <scope>POSSIBLE FUNCTION</scope>
    <source>
        <strain>ATCC 25618 / H37Rv</strain>
    </source>
</reference>
<protein>
    <recommendedName>
        <fullName evidence="1">Ribonuclease VapC16</fullName>
        <shortName evidence="1">RNase VapC16</shortName>
        <ecNumber evidence="1">3.1.-.-</ecNumber>
    </recommendedName>
    <alternativeName>
        <fullName evidence="1">Toxin VapC16</fullName>
    </alternativeName>
</protein>
<sequence length="141" mass="15443">MTMACTACPTIWTLRCQTTCSNAFTGEALPHRHPRLAADAVNETRAIVQDVRNSILLSAASAWEIAINYRLGKLPPPEPSASYVPDRMRRCGTSPLSVDHAHTAHRRASGSPSTSIRPCAHRPGTAAWPDDHHRRRPVSCL</sequence>
<dbReference type="EC" id="3.1.-.-" evidence="1"/>
<dbReference type="EMBL" id="AL123456">
    <property type="protein sequence ID" value="CCP45010.1"/>
    <property type="molecule type" value="Genomic_DNA"/>
</dbReference>
<dbReference type="RefSeq" id="WP_010886140.1">
    <property type="nucleotide sequence ID" value="NZ_NVQJ01000008.1"/>
</dbReference>
<dbReference type="RefSeq" id="YP_007410917.1">
    <property type="nucleotide sequence ID" value="NC_000962.3"/>
</dbReference>
<dbReference type="SMR" id="P0CV93"/>
<dbReference type="STRING" id="83332.Rv2231A"/>
<dbReference type="PaxDb" id="83332-Rv2231A"/>
<dbReference type="GeneID" id="14515883"/>
<dbReference type="KEGG" id="mtu:Rv2231A"/>
<dbReference type="TubercuList" id="Rv2231A"/>
<dbReference type="eggNOG" id="COG3744">
    <property type="taxonomic scope" value="Bacteria"/>
</dbReference>
<dbReference type="InParanoid" id="P0CV93"/>
<dbReference type="OrthoDB" id="9798990at2"/>
<dbReference type="Proteomes" id="UP000001584">
    <property type="component" value="Chromosome"/>
</dbReference>
<dbReference type="GO" id="GO:0046872">
    <property type="term" value="F:metal ion binding"/>
    <property type="evidence" value="ECO:0007669"/>
    <property type="project" value="UniProtKB-KW"/>
</dbReference>
<dbReference type="GO" id="GO:0004540">
    <property type="term" value="F:RNA nuclease activity"/>
    <property type="evidence" value="ECO:0007669"/>
    <property type="project" value="InterPro"/>
</dbReference>
<dbReference type="HAMAP" id="MF_00265">
    <property type="entry name" value="VapC_Nob1"/>
    <property type="match status" value="1"/>
</dbReference>
<dbReference type="InterPro" id="IPR052919">
    <property type="entry name" value="TA_system_RNase"/>
</dbReference>
<dbReference type="InterPro" id="IPR022907">
    <property type="entry name" value="VapC_family"/>
</dbReference>
<dbReference type="PANTHER" id="PTHR36173:SF2">
    <property type="entry name" value="RIBONUCLEASE VAPC16"/>
    <property type="match status" value="1"/>
</dbReference>
<dbReference type="PANTHER" id="PTHR36173">
    <property type="entry name" value="RIBONUCLEASE VAPC16-RELATED"/>
    <property type="match status" value="1"/>
</dbReference>